<sequence length="189" mass="20028">MTVHIHPAVDQGVKQGSGSFAGGTLVCKCQDRPVKVGIKGDVAHNHACGCTKCWKPDGATFSVVAVVPRDNVTVLENGDKLHVVDASATIQRHACKVCGTHMYGRIENKSHPFYGLDFIHPELFQEGGSAAPEFAAFVSSVIESGVDPSEMPGIRARLKELGLEPYDCLSPGLMDAIATSVAKSQQKAA</sequence>
<reference key="1">
    <citation type="submission" date="2006-03" db="EMBL/GenBank/DDBJ databases">
        <title>Complete sequence of Rhodopseudomonas palustris BisB18.</title>
        <authorList>
            <consortium name="US DOE Joint Genome Institute"/>
            <person name="Copeland A."/>
            <person name="Lucas S."/>
            <person name="Lapidus A."/>
            <person name="Barry K."/>
            <person name="Detter J.C."/>
            <person name="Glavina del Rio T."/>
            <person name="Hammon N."/>
            <person name="Israni S."/>
            <person name="Dalin E."/>
            <person name="Tice H."/>
            <person name="Pitluck S."/>
            <person name="Chain P."/>
            <person name="Malfatti S."/>
            <person name="Shin M."/>
            <person name="Vergez L."/>
            <person name="Schmutz J."/>
            <person name="Larimer F."/>
            <person name="Land M."/>
            <person name="Hauser L."/>
            <person name="Pelletier D.A."/>
            <person name="Kyrpides N."/>
            <person name="Anderson I."/>
            <person name="Oda Y."/>
            <person name="Harwood C.S."/>
            <person name="Richardson P."/>
        </authorList>
    </citation>
    <scope>NUCLEOTIDE SEQUENCE [LARGE SCALE GENOMIC DNA]</scope>
    <source>
        <strain>BisB18</strain>
    </source>
</reference>
<name>GFA_RHOPB</name>
<keyword id="KW-0456">Lyase</keyword>
<keyword id="KW-0479">Metal-binding</keyword>
<keyword id="KW-0862">Zinc</keyword>
<organism>
    <name type="scientific">Rhodopseudomonas palustris (strain BisB18)</name>
    <dbReference type="NCBI Taxonomy" id="316056"/>
    <lineage>
        <taxon>Bacteria</taxon>
        <taxon>Pseudomonadati</taxon>
        <taxon>Pseudomonadota</taxon>
        <taxon>Alphaproteobacteria</taxon>
        <taxon>Hyphomicrobiales</taxon>
        <taxon>Nitrobacteraceae</taxon>
        <taxon>Rhodopseudomonas</taxon>
    </lineage>
</organism>
<dbReference type="EC" id="4.4.1.22" evidence="1"/>
<dbReference type="EMBL" id="CP000301">
    <property type="protein sequence ID" value="ABD85679.1"/>
    <property type="molecule type" value="Genomic_DNA"/>
</dbReference>
<dbReference type="SMR" id="Q21D57"/>
<dbReference type="STRING" id="316056.RPC_0100"/>
<dbReference type="KEGG" id="rpc:RPC_0100"/>
<dbReference type="eggNOG" id="COG3791">
    <property type="taxonomic scope" value="Bacteria"/>
</dbReference>
<dbReference type="HOGENOM" id="CLU_090716_0_0_5"/>
<dbReference type="OrthoDB" id="9011205at2"/>
<dbReference type="UniPathway" id="UPA00562">
    <property type="reaction ID" value="UER00621"/>
</dbReference>
<dbReference type="GO" id="GO:0051907">
    <property type="term" value="F:S-(hydroxymethyl)glutathione synthase activity"/>
    <property type="evidence" value="ECO:0007669"/>
    <property type="project" value="UniProtKB-UniRule"/>
</dbReference>
<dbReference type="GO" id="GO:0008270">
    <property type="term" value="F:zinc ion binding"/>
    <property type="evidence" value="ECO:0007669"/>
    <property type="project" value="UniProtKB-UniRule"/>
</dbReference>
<dbReference type="GO" id="GO:0046294">
    <property type="term" value="P:formaldehyde catabolic process"/>
    <property type="evidence" value="ECO:0007669"/>
    <property type="project" value="UniProtKB-UniRule"/>
</dbReference>
<dbReference type="Gene3D" id="3.90.1590.10">
    <property type="entry name" value="glutathione-dependent formaldehyde- activating enzyme (gfa)"/>
    <property type="match status" value="1"/>
</dbReference>
<dbReference type="HAMAP" id="MF_00723">
    <property type="entry name" value="Formald_GSH"/>
    <property type="match status" value="1"/>
</dbReference>
<dbReference type="InterPro" id="IPR006913">
    <property type="entry name" value="CENP-V/GFA"/>
</dbReference>
<dbReference type="InterPro" id="IPR014185">
    <property type="entry name" value="Formald_GSH"/>
</dbReference>
<dbReference type="InterPro" id="IPR011057">
    <property type="entry name" value="Mss4-like_sf"/>
</dbReference>
<dbReference type="NCBIfam" id="TIGR02820">
    <property type="entry name" value="formald_GSH"/>
    <property type="match status" value="1"/>
</dbReference>
<dbReference type="NCBIfam" id="NF003829">
    <property type="entry name" value="PRK05417.1"/>
    <property type="match status" value="1"/>
</dbReference>
<dbReference type="PANTHER" id="PTHR33337:SF40">
    <property type="entry name" value="CENP-V_GFA DOMAIN-CONTAINING PROTEIN-RELATED"/>
    <property type="match status" value="1"/>
</dbReference>
<dbReference type="PANTHER" id="PTHR33337">
    <property type="entry name" value="GFA DOMAIN-CONTAINING PROTEIN"/>
    <property type="match status" value="1"/>
</dbReference>
<dbReference type="Pfam" id="PF04828">
    <property type="entry name" value="GFA"/>
    <property type="match status" value="1"/>
</dbReference>
<dbReference type="PIRSF" id="PIRSF033318">
    <property type="entry name" value="Formald_GSH"/>
    <property type="match status" value="1"/>
</dbReference>
<dbReference type="SUPFAM" id="SSF51316">
    <property type="entry name" value="Mss4-like"/>
    <property type="match status" value="1"/>
</dbReference>
<dbReference type="PROSITE" id="PS51891">
    <property type="entry name" value="CENP_V_GFA"/>
    <property type="match status" value="1"/>
</dbReference>
<proteinExistence type="inferred from homology"/>
<comment type="function">
    <text evidence="1">Catalyzes the condensation of formaldehyde and glutathione to S-hydroxymethylglutathione.</text>
</comment>
<comment type="catalytic activity">
    <reaction evidence="1">
        <text>S-(hydroxymethyl)glutathione = glutathione + formaldehyde</text>
        <dbReference type="Rhea" id="RHEA:22488"/>
        <dbReference type="ChEBI" id="CHEBI:16842"/>
        <dbReference type="ChEBI" id="CHEBI:57925"/>
        <dbReference type="ChEBI" id="CHEBI:58758"/>
        <dbReference type="EC" id="4.4.1.22"/>
    </reaction>
</comment>
<comment type="cofactor">
    <cofactor evidence="1 2">
        <name>Zn(2+)</name>
        <dbReference type="ChEBI" id="CHEBI:29105"/>
    </cofactor>
    <text evidence="1 2">Binds 2 Zn(2+) ions per subunit.</text>
</comment>
<comment type="pathway">
    <text evidence="1">One-carbon metabolism; formaldehyde degradation; formate from formaldehyde (glutathione route): step 1/3.</text>
</comment>
<comment type="similarity">
    <text evidence="1">Belongs to the Gfa family.</text>
</comment>
<accession>Q21D57</accession>
<evidence type="ECO:0000255" key="1">
    <source>
        <dbReference type="HAMAP-Rule" id="MF_00723"/>
    </source>
</evidence>
<evidence type="ECO:0000255" key="2">
    <source>
        <dbReference type="PROSITE-ProRule" id="PRU01239"/>
    </source>
</evidence>
<protein>
    <recommendedName>
        <fullName evidence="1">Glutathione-dependent formaldehyde-activating enzyme</fullName>
        <ecNumber evidence="1">4.4.1.22</ecNumber>
    </recommendedName>
    <alternativeName>
        <fullName evidence="1">S-(hydroxymethyl)glutathione synthase</fullName>
    </alternativeName>
</protein>
<feature type="chain" id="PRO_1000045840" description="Glutathione-dependent formaldehyde-activating enzyme">
    <location>
        <begin position="1"/>
        <end position="189"/>
    </location>
</feature>
<feature type="domain" description="CENP-V/GFA" evidence="2">
    <location>
        <begin position="20"/>
        <end position="167"/>
    </location>
</feature>
<feature type="binding site" evidence="1 2">
    <location>
        <position position="27"/>
    </location>
    <ligand>
        <name>Zn(2+)</name>
        <dbReference type="ChEBI" id="CHEBI:29105"/>
        <label>1</label>
        <note>structural</note>
    </ligand>
</feature>
<feature type="binding site" evidence="1 2">
    <location>
        <position position="29"/>
    </location>
    <ligand>
        <name>Zn(2+)</name>
        <dbReference type="ChEBI" id="CHEBI:29105"/>
        <label>1</label>
        <note>structural</note>
    </ligand>
</feature>
<feature type="binding site" evidence="1 2">
    <location>
        <position position="48"/>
    </location>
    <ligand>
        <name>Zn(2+)</name>
        <dbReference type="ChEBI" id="CHEBI:29105"/>
        <label>2</label>
        <note>catalytic</note>
    </ligand>
</feature>
<feature type="binding site" evidence="1 2">
    <location>
        <position position="50"/>
    </location>
    <ligand>
        <name>Zn(2+)</name>
        <dbReference type="ChEBI" id="CHEBI:29105"/>
        <label>2</label>
        <note>catalytic</note>
    </ligand>
</feature>
<feature type="binding site" evidence="1 2">
    <location>
        <position position="53"/>
    </location>
    <ligand>
        <name>Zn(2+)</name>
        <dbReference type="ChEBI" id="CHEBI:29105"/>
        <label>2</label>
        <note>catalytic</note>
    </ligand>
</feature>
<feature type="binding site" evidence="1 2">
    <location>
        <position position="95"/>
    </location>
    <ligand>
        <name>Zn(2+)</name>
        <dbReference type="ChEBI" id="CHEBI:29105"/>
        <label>1</label>
        <note>structural</note>
    </ligand>
</feature>
<feature type="binding site" evidence="1 2">
    <location>
        <position position="98"/>
    </location>
    <ligand>
        <name>Zn(2+)</name>
        <dbReference type="ChEBI" id="CHEBI:29105"/>
        <label>1</label>
        <note>structural</note>
    </ligand>
</feature>
<gene>
    <name evidence="1" type="primary">gfa</name>
    <name type="ordered locus">RPC_0100</name>
</gene>